<feature type="chain" id="PRO_0000409498" description="Intraflagellar transport protein 43 homolog B">
    <location>
        <begin position="1"/>
        <end position="215"/>
    </location>
</feature>
<feature type="region of interest" description="Disordered" evidence="2">
    <location>
        <begin position="1"/>
        <end position="107"/>
    </location>
</feature>
<comment type="function">
    <text evidence="1">Component of IFT complex A (IFT-A) involved in retrograde ciliary transport along microtubules from the ciliary tip to the base.</text>
</comment>
<comment type="subunit">
    <text evidence="1">Component of IFT complex A.</text>
</comment>
<comment type="similarity">
    <text evidence="3">Belongs to the IFT43 family.</text>
</comment>
<accession>B5X7E4</accession>
<keyword id="KW-0970">Cilium biogenesis/degradation</keyword>
<keyword id="KW-1185">Reference proteome</keyword>
<sequence length="215" mass="24108">MDDHLKLGDSGVVKNVARLGRRGQRARQAAEQTSLEEPRHVRKSSSSTSMGEGPPPKPARRQGGWAEETSGSAKSGRRPAMVQDVEDRRLRPQTPQGSDGEGDIPVIPDLDEVQEEDLNMQVAAPPSIQVNRVMTYRDLDNDLMKYSAFRTLDGEIDLKLLTKVLAPEQEVREEDVGWDWDHLFTEVSSELLTEWDQGEKEEQVCVMRTSLPKMG</sequence>
<name>IF43B_SALSA</name>
<organism>
    <name type="scientific">Salmo salar</name>
    <name type="common">Atlantic salmon</name>
    <dbReference type="NCBI Taxonomy" id="8030"/>
    <lineage>
        <taxon>Eukaryota</taxon>
        <taxon>Metazoa</taxon>
        <taxon>Chordata</taxon>
        <taxon>Craniata</taxon>
        <taxon>Vertebrata</taxon>
        <taxon>Euteleostomi</taxon>
        <taxon>Actinopterygii</taxon>
        <taxon>Neopterygii</taxon>
        <taxon>Teleostei</taxon>
        <taxon>Protacanthopterygii</taxon>
        <taxon>Salmoniformes</taxon>
        <taxon>Salmonidae</taxon>
        <taxon>Salmoninae</taxon>
        <taxon>Salmo</taxon>
    </lineage>
</organism>
<protein>
    <recommendedName>
        <fullName>Intraflagellar transport protein 43 homolog B</fullName>
    </recommendedName>
</protein>
<gene>
    <name type="primary">ift43b</name>
</gene>
<proteinExistence type="evidence at transcript level"/>
<dbReference type="EMBL" id="BT046963">
    <property type="protein sequence ID" value="ACI66764.1"/>
    <property type="molecule type" value="mRNA"/>
</dbReference>
<dbReference type="SMR" id="B5X7E4"/>
<dbReference type="STRING" id="8030.ENSSSAP00000004535"/>
<dbReference type="PaxDb" id="8030-ENSSSAP00000004535"/>
<dbReference type="Proteomes" id="UP000087266">
    <property type="component" value="Unplaced"/>
</dbReference>
<dbReference type="GO" id="GO:0005929">
    <property type="term" value="C:cilium"/>
    <property type="evidence" value="ECO:0007669"/>
    <property type="project" value="TreeGrafter"/>
</dbReference>
<dbReference type="GO" id="GO:0030991">
    <property type="term" value="C:intraciliary transport particle A"/>
    <property type="evidence" value="ECO:0007669"/>
    <property type="project" value="InterPro"/>
</dbReference>
<dbReference type="GO" id="GO:0060271">
    <property type="term" value="P:cilium assembly"/>
    <property type="evidence" value="ECO:0000250"/>
    <property type="project" value="UniProtKB"/>
</dbReference>
<dbReference type="GO" id="GO:0035721">
    <property type="term" value="P:intraciliary retrograde transport"/>
    <property type="evidence" value="ECO:0000250"/>
    <property type="project" value="UniProtKB"/>
</dbReference>
<dbReference type="InterPro" id="IPR029302">
    <property type="entry name" value="IFT43"/>
</dbReference>
<dbReference type="PANTHER" id="PTHR33724">
    <property type="entry name" value="INTRAFLAGELLAR TRANSPORT PROTEIN 43 HOMOLOG"/>
    <property type="match status" value="1"/>
</dbReference>
<dbReference type="PANTHER" id="PTHR33724:SF1">
    <property type="entry name" value="INTRAFLAGELLAR TRANSPORT PROTEIN 43 HOMOLOG"/>
    <property type="match status" value="1"/>
</dbReference>
<dbReference type="Pfam" id="PF15305">
    <property type="entry name" value="IFT43"/>
    <property type="match status" value="1"/>
</dbReference>
<evidence type="ECO:0000250" key="1"/>
<evidence type="ECO:0000256" key="2">
    <source>
        <dbReference type="SAM" id="MobiDB-lite"/>
    </source>
</evidence>
<evidence type="ECO:0000305" key="3"/>
<reference key="1">
    <citation type="journal article" date="2010" name="BMC Genomics">
        <title>Salmo salar and Esox lucius full-length cDNA sequences reveal changes in evolutionary pressures on a post-tetraploidization genome.</title>
        <authorList>
            <person name="Leong J.S."/>
            <person name="Jantzen S.G."/>
            <person name="von Schalburg K.R."/>
            <person name="Cooper G.A."/>
            <person name="Messmer A.M."/>
            <person name="Liao N.Y."/>
            <person name="Munro S."/>
            <person name="Moore R."/>
            <person name="Holt R.A."/>
            <person name="Jones S.J."/>
            <person name="Davidson W.S."/>
            <person name="Koop B.F."/>
        </authorList>
    </citation>
    <scope>NUCLEOTIDE SEQUENCE [LARGE SCALE MRNA]</scope>
</reference>